<accession>Q6L1C0</accession>
<gene>
    <name evidence="1" type="primary">rpl29</name>
    <name type="ordered locus">PTO0647</name>
</gene>
<comment type="similarity">
    <text evidence="1">Belongs to the universal ribosomal protein uL29 family.</text>
</comment>
<sequence>MELRAKALREMSDEELNEKLSSLKESLLRERSSVAMGGAPSSPGKMRSIRRQIARVLTVMEEKKR</sequence>
<protein>
    <recommendedName>
        <fullName evidence="1">Large ribosomal subunit protein uL29</fullName>
    </recommendedName>
    <alternativeName>
        <fullName evidence="3">50S ribosomal protein L29</fullName>
    </alternativeName>
</protein>
<proteinExistence type="inferred from homology"/>
<organism>
    <name type="scientific">Picrophilus torridus (strain ATCC 700027 / DSM 9790 / JCM 10055 / NBRC 100828 / KAW 2/3)</name>
    <dbReference type="NCBI Taxonomy" id="1122961"/>
    <lineage>
        <taxon>Archaea</taxon>
        <taxon>Methanobacteriati</taxon>
        <taxon>Thermoplasmatota</taxon>
        <taxon>Thermoplasmata</taxon>
        <taxon>Thermoplasmatales</taxon>
        <taxon>Picrophilaceae</taxon>
        <taxon>Picrophilus</taxon>
    </lineage>
</organism>
<name>RL29_PICTO</name>
<evidence type="ECO:0000255" key="1">
    <source>
        <dbReference type="HAMAP-Rule" id="MF_00374"/>
    </source>
</evidence>
<evidence type="ECO:0000256" key="2">
    <source>
        <dbReference type="SAM" id="MobiDB-lite"/>
    </source>
</evidence>
<evidence type="ECO:0000305" key="3"/>
<dbReference type="EMBL" id="AE017261">
    <property type="protein sequence ID" value="AAT43232.1"/>
    <property type="molecule type" value="Genomic_DNA"/>
</dbReference>
<dbReference type="RefSeq" id="WP_011177448.1">
    <property type="nucleotide sequence ID" value="NC_005877.1"/>
</dbReference>
<dbReference type="SMR" id="Q6L1C0"/>
<dbReference type="FunCoup" id="Q6L1C0">
    <property type="interactions" value="148"/>
</dbReference>
<dbReference type="STRING" id="263820.PTO0647"/>
<dbReference type="PaxDb" id="263820-PTO0647"/>
<dbReference type="GeneID" id="2844437"/>
<dbReference type="KEGG" id="pto:PTO0647"/>
<dbReference type="eggNOG" id="arCOG00785">
    <property type="taxonomic scope" value="Archaea"/>
</dbReference>
<dbReference type="HOGENOM" id="CLU_158491_2_2_2"/>
<dbReference type="InParanoid" id="Q6L1C0"/>
<dbReference type="OrthoDB" id="11736at2157"/>
<dbReference type="Proteomes" id="UP000000438">
    <property type="component" value="Chromosome"/>
</dbReference>
<dbReference type="GO" id="GO:0022625">
    <property type="term" value="C:cytosolic large ribosomal subunit"/>
    <property type="evidence" value="ECO:0007669"/>
    <property type="project" value="TreeGrafter"/>
</dbReference>
<dbReference type="GO" id="GO:0003735">
    <property type="term" value="F:structural constituent of ribosome"/>
    <property type="evidence" value="ECO:0007669"/>
    <property type="project" value="InterPro"/>
</dbReference>
<dbReference type="GO" id="GO:0006412">
    <property type="term" value="P:translation"/>
    <property type="evidence" value="ECO:0007669"/>
    <property type="project" value="UniProtKB-UniRule"/>
</dbReference>
<dbReference type="CDD" id="cd00427">
    <property type="entry name" value="Ribosomal_L29_HIP"/>
    <property type="match status" value="1"/>
</dbReference>
<dbReference type="FunFam" id="1.10.287.310:FF:000001">
    <property type="entry name" value="50S ribosomal protein L29"/>
    <property type="match status" value="1"/>
</dbReference>
<dbReference type="Gene3D" id="1.10.287.310">
    <property type="match status" value="1"/>
</dbReference>
<dbReference type="HAMAP" id="MF_00374">
    <property type="entry name" value="Ribosomal_uL29"/>
    <property type="match status" value="1"/>
</dbReference>
<dbReference type="InterPro" id="IPR050063">
    <property type="entry name" value="Ribosomal_protein_uL29"/>
</dbReference>
<dbReference type="InterPro" id="IPR001854">
    <property type="entry name" value="Ribosomal_uL29"/>
</dbReference>
<dbReference type="InterPro" id="IPR018254">
    <property type="entry name" value="Ribosomal_uL29_CS"/>
</dbReference>
<dbReference type="InterPro" id="IPR036049">
    <property type="entry name" value="Ribosomal_uL29_sf"/>
</dbReference>
<dbReference type="NCBIfam" id="TIGR00012">
    <property type="entry name" value="L29"/>
    <property type="match status" value="1"/>
</dbReference>
<dbReference type="PANTHER" id="PTHR10916">
    <property type="entry name" value="60S RIBOSOMAL PROTEIN L35/50S RIBOSOMAL PROTEIN L29"/>
    <property type="match status" value="1"/>
</dbReference>
<dbReference type="PANTHER" id="PTHR10916:SF0">
    <property type="entry name" value="LARGE RIBOSOMAL SUBUNIT PROTEIN UL29C"/>
    <property type="match status" value="1"/>
</dbReference>
<dbReference type="Pfam" id="PF00831">
    <property type="entry name" value="Ribosomal_L29"/>
    <property type="match status" value="1"/>
</dbReference>
<dbReference type="SUPFAM" id="SSF46561">
    <property type="entry name" value="Ribosomal protein L29 (L29p)"/>
    <property type="match status" value="1"/>
</dbReference>
<dbReference type="PROSITE" id="PS00579">
    <property type="entry name" value="RIBOSOMAL_L29"/>
    <property type="match status" value="1"/>
</dbReference>
<reference key="1">
    <citation type="journal article" date="2004" name="Proc. Natl. Acad. Sci. U.S.A.">
        <title>Genome sequence of Picrophilus torridus and its implications for life around pH 0.</title>
        <authorList>
            <person name="Fuetterer O."/>
            <person name="Angelov A."/>
            <person name="Liesegang H."/>
            <person name="Gottschalk G."/>
            <person name="Schleper C."/>
            <person name="Schepers B."/>
            <person name="Dock C."/>
            <person name="Antranikian G."/>
            <person name="Liebl W."/>
        </authorList>
    </citation>
    <scope>NUCLEOTIDE SEQUENCE [LARGE SCALE GENOMIC DNA]</scope>
    <source>
        <strain>ATCC 700027 / DSM 9790 / JCM 10055 / NBRC 100828 / KAW 2/3</strain>
    </source>
</reference>
<feature type="chain" id="PRO_0000130517" description="Large ribosomal subunit protein uL29">
    <location>
        <begin position="1"/>
        <end position="65"/>
    </location>
</feature>
<feature type="region of interest" description="Disordered" evidence="2">
    <location>
        <begin position="30"/>
        <end position="49"/>
    </location>
</feature>
<keyword id="KW-0687">Ribonucleoprotein</keyword>
<keyword id="KW-0689">Ribosomal protein</keyword>